<name>FABP5_CAEEL</name>
<gene>
    <name type="primary">lbp-5</name>
    <name type="ORF">W02D3.7</name>
</gene>
<reference key="1">
    <citation type="journal article" date="1998" name="Science">
        <title>Genome sequence of the nematode C. elegans: a platform for investigating biology.</title>
        <authorList>
            <consortium name="The C. elegans sequencing consortium"/>
        </authorList>
    </citation>
    <scope>NUCLEOTIDE SEQUENCE [LARGE SCALE GENOMIC DNA]</scope>
    <source>
        <strain>Bristol N2</strain>
    </source>
</reference>
<accession>O01814</accession>
<dbReference type="EMBL" id="FO081084">
    <property type="protein sequence ID" value="CCD68990.1"/>
    <property type="molecule type" value="Genomic_DNA"/>
</dbReference>
<dbReference type="PIR" id="T15207">
    <property type="entry name" value="T15207"/>
</dbReference>
<dbReference type="RefSeq" id="NP_491928.1">
    <property type="nucleotide sequence ID" value="NM_059527.6"/>
</dbReference>
<dbReference type="SMR" id="O01814"/>
<dbReference type="BioGRID" id="56198">
    <property type="interactions" value="8"/>
</dbReference>
<dbReference type="FunCoup" id="O01814">
    <property type="interactions" value="183"/>
</dbReference>
<dbReference type="STRING" id="6239.W02D3.7.1"/>
<dbReference type="PaxDb" id="6239-W02D3.7"/>
<dbReference type="PeptideAtlas" id="O01814"/>
<dbReference type="EnsemblMetazoa" id="W02D3.7.1">
    <property type="protein sequence ID" value="W02D3.7.1"/>
    <property type="gene ID" value="WBGene00002257"/>
</dbReference>
<dbReference type="GeneID" id="191700"/>
<dbReference type="KEGG" id="cel:CELE_W02D3.7"/>
<dbReference type="UCSC" id="W02D3.7">
    <property type="organism name" value="c. elegans"/>
</dbReference>
<dbReference type="AGR" id="WB:WBGene00002257"/>
<dbReference type="CTD" id="191700"/>
<dbReference type="WormBase" id="W02D3.7">
    <property type="protein sequence ID" value="CE14430"/>
    <property type="gene ID" value="WBGene00002257"/>
    <property type="gene designation" value="lbp-5"/>
</dbReference>
<dbReference type="eggNOG" id="KOG4015">
    <property type="taxonomic scope" value="Eukaryota"/>
</dbReference>
<dbReference type="HOGENOM" id="CLU_113772_0_1_1"/>
<dbReference type="InParanoid" id="O01814"/>
<dbReference type="OMA" id="MMLTFEG"/>
<dbReference type="OrthoDB" id="354351at2759"/>
<dbReference type="PhylomeDB" id="O01814"/>
<dbReference type="Reactome" id="R-CEL-159418">
    <property type="pathway name" value="Recycling of bile acids and salts"/>
</dbReference>
<dbReference type="Reactome" id="R-CEL-163560">
    <property type="pathway name" value="Triglyceride catabolism"/>
</dbReference>
<dbReference type="Reactome" id="R-CEL-189483">
    <property type="pathway name" value="Heme degradation"/>
</dbReference>
<dbReference type="Reactome" id="R-CEL-2453902">
    <property type="pathway name" value="The canonical retinoid cycle in rods (twilight vision)"/>
</dbReference>
<dbReference type="Reactome" id="R-CEL-5362517">
    <property type="pathway name" value="Signaling by Retinoic Acid"/>
</dbReference>
<dbReference type="Reactome" id="R-CEL-975634">
    <property type="pathway name" value="Retinoid metabolism and transport"/>
</dbReference>
<dbReference type="PRO" id="PR:O01814"/>
<dbReference type="Proteomes" id="UP000001940">
    <property type="component" value="Chromosome I"/>
</dbReference>
<dbReference type="Bgee" id="WBGene00002257">
    <property type="expression patterns" value="Expressed in larva and 3 other cell types or tissues"/>
</dbReference>
<dbReference type="GO" id="GO:0005829">
    <property type="term" value="C:cytosol"/>
    <property type="evidence" value="ECO:0000318"/>
    <property type="project" value="GO_Central"/>
</dbReference>
<dbReference type="GO" id="GO:0005634">
    <property type="term" value="C:nucleus"/>
    <property type="evidence" value="ECO:0000314"/>
    <property type="project" value="WormBase"/>
</dbReference>
<dbReference type="GO" id="GO:0048471">
    <property type="term" value="C:perinuclear region of cytoplasm"/>
    <property type="evidence" value="ECO:0000314"/>
    <property type="project" value="WormBase"/>
</dbReference>
<dbReference type="GO" id="GO:0005504">
    <property type="term" value="F:fatty acid binding"/>
    <property type="evidence" value="ECO:0000314"/>
    <property type="project" value="WormBase"/>
</dbReference>
<dbReference type="GO" id="GO:0015908">
    <property type="term" value="P:fatty acid transport"/>
    <property type="evidence" value="ECO:0000318"/>
    <property type="project" value="GO_Central"/>
</dbReference>
<dbReference type="CDD" id="cd00742">
    <property type="entry name" value="FABP"/>
    <property type="match status" value="1"/>
</dbReference>
<dbReference type="FunFam" id="2.40.128.20:FF:000001">
    <property type="entry name" value="Fatty acid-binding protein, adipocyte"/>
    <property type="match status" value="1"/>
</dbReference>
<dbReference type="Gene3D" id="2.40.128.20">
    <property type="match status" value="1"/>
</dbReference>
<dbReference type="InterPro" id="IPR012674">
    <property type="entry name" value="Calycin"/>
</dbReference>
<dbReference type="InterPro" id="IPR000463">
    <property type="entry name" value="Fatty_acid-bd"/>
</dbReference>
<dbReference type="InterPro" id="IPR031259">
    <property type="entry name" value="ILBP"/>
</dbReference>
<dbReference type="InterPro" id="IPR000566">
    <property type="entry name" value="Lipocln_cytosolic_FA-bd_dom"/>
</dbReference>
<dbReference type="PANTHER" id="PTHR11955">
    <property type="entry name" value="FATTY ACID BINDING PROTEIN"/>
    <property type="match status" value="1"/>
</dbReference>
<dbReference type="Pfam" id="PF00061">
    <property type="entry name" value="Lipocalin"/>
    <property type="match status" value="1"/>
</dbReference>
<dbReference type="PRINTS" id="PR00178">
    <property type="entry name" value="FATTYACIDBP"/>
</dbReference>
<dbReference type="SUPFAM" id="SSF50814">
    <property type="entry name" value="Lipocalins"/>
    <property type="match status" value="1"/>
</dbReference>
<dbReference type="PROSITE" id="PS00214">
    <property type="entry name" value="FABP"/>
    <property type="match status" value="1"/>
</dbReference>
<organism>
    <name type="scientific">Caenorhabditis elegans</name>
    <dbReference type="NCBI Taxonomy" id="6239"/>
    <lineage>
        <taxon>Eukaryota</taxon>
        <taxon>Metazoa</taxon>
        <taxon>Ecdysozoa</taxon>
        <taxon>Nematoda</taxon>
        <taxon>Chromadorea</taxon>
        <taxon>Rhabditida</taxon>
        <taxon>Rhabditina</taxon>
        <taxon>Rhabditomorpha</taxon>
        <taxon>Rhabditoidea</taxon>
        <taxon>Rhabditidae</taxon>
        <taxon>Peloderinae</taxon>
        <taxon>Caenorhabditis</taxon>
    </lineage>
</organism>
<feature type="chain" id="PRO_0000067423" description="Fatty acid-binding protein homolog 5">
    <location>
        <begin position="1"/>
        <end position="136"/>
    </location>
</feature>
<feature type="binding site" evidence="1">
    <location>
        <position position="111"/>
    </location>
    <ligand>
        <name>a fatty acid</name>
        <dbReference type="ChEBI" id="CHEBI:28868"/>
    </ligand>
</feature>
<feature type="binding site" evidence="1">
    <location>
        <begin position="131"/>
        <end position="133"/>
    </location>
    <ligand>
        <name>a fatty acid</name>
        <dbReference type="ChEBI" id="CHEBI:28868"/>
    </ligand>
</feature>
<evidence type="ECO:0000250" key="1"/>
<evidence type="ECO:0000305" key="2"/>
<protein>
    <recommendedName>
        <fullName>Fatty acid-binding protein homolog 5</fullName>
    </recommendedName>
</protein>
<sequence length="136" mass="15533">MSAEQFVGRWKLVESENFEDYLKEVGVGLLLRKAACAAKPTLEIKVNGNKWHVNQLSTFKNTTLEFTLGVEFDETTPDGRQFKSTITIEDGKVVHVQKRIKDSDHDSVITRWFEGEKLITTLQSGSVISRRAYIRE</sequence>
<keyword id="KW-0446">Lipid-binding</keyword>
<keyword id="KW-1185">Reference proteome</keyword>
<keyword id="KW-0813">Transport</keyword>
<comment type="similarity">
    <text evidence="2">Belongs to the calycin superfamily. Fatty-acid binding protein (FABP) family.</text>
</comment>
<proteinExistence type="inferred from homology"/>